<accession>Q5HJ84</accession>
<evidence type="ECO:0000250" key="1">
    <source>
        <dbReference type="UniProtKB" id="A0A0H2XIE9"/>
    </source>
</evidence>
<evidence type="ECO:0000250" key="2">
    <source>
        <dbReference type="UniProtKB" id="P0C047"/>
    </source>
</evidence>
<evidence type="ECO:0000250" key="3">
    <source>
        <dbReference type="UniProtKB" id="Q2G182"/>
    </source>
</evidence>
<evidence type="ECO:0000305" key="4"/>
<sequence length="104" mass="11510">MGGYKGIKADGGKVDQAKQLAAKTAKDIEACQKQTQQLAEYIEGSDWEGQFANKVKDVLLIMAKFQEELVQPMADHQKAIDNLSQNLAKYDTLSIKQGLDRVNP</sequence>
<feature type="chain" id="PRO_0000167830" description="Type VII secretion system extracellular protein B">
    <location>
        <begin position="1"/>
        <end position="104"/>
    </location>
</feature>
<dbReference type="EMBL" id="CP000046">
    <property type="protein sequence ID" value="AAW38832.1"/>
    <property type="molecule type" value="Genomic_DNA"/>
</dbReference>
<dbReference type="RefSeq" id="WP_000509668.1">
    <property type="nucleotide sequence ID" value="NZ_JBGOFO010000001.1"/>
</dbReference>
<dbReference type="SMR" id="Q5HJ84"/>
<dbReference type="GeneID" id="66838592"/>
<dbReference type="KEGG" id="sac:SACOL0278"/>
<dbReference type="HOGENOM" id="CLU_2248426_0_0_9"/>
<dbReference type="Proteomes" id="UP000000530">
    <property type="component" value="Chromosome"/>
</dbReference>
<dbReference type="GO" id="GO:0005576">
    <property type="term" value="C:extracellular region"/>
    <property type="evidence" value="ECO:0007669"/>
    <property type="project" value="UniProtKB-SubCell"/>
</dbReference>
<dbReference type="InterPro" id="IPR036689">
    <property type="entry name" value="ESAT-6-like_sf"/>
</dbReference>
<dbReference type="InterPro" id="IPR010310">
    <property type="entry name" value="T7SS_ESAT-6-like"/>
</dbReference>
<dbReference type="Pfam" id="PF06013">
    <property type="entry name" value="WXG100"/>
    <property type="match status" value="1"/>
</dbReference>
<dbReference type="SUPFAM" id="SSF140453">
    <property type="entry name" value="EsxAB dimer-like"/>
    <property type="match status" value="1"/>
</dbReference>
<reference key="1">
    <citation type="journal article" date="2005" name="J. Bacteriol.">
        <title>Insights on evolution of virulence and resistance from the complete genome analysis of an early methicillin-resistant Staphylococcus aureus strain and a biofilm-producing methicillin-resistant Staphylococcus epidermidis strain.</title>
        <authorList>
            <person name="Gill S.R."/>
            <person name="Fouts D.E."/>
            <person name="Archer G.L."/>
            <person name="Mongodin E.F."/>
            <person name="DeBoy R.T."/>
            <person name="Ravel J."/>
            <person name="Paulsen I.T."/>
            <person name="Kolonay J.F."/>
            <person name="Brinkac L.M."/>
            <person name="Beanan M.J."/>
            <person name="Dodson R.J."/>
            <person name="Daugherty S.C."/>
            <person name="Madupu R."/>
            <person name="Angiuoli S.V."/>
            <person name="Durkin A.S."/>
            <person name="Haft D.H."/>
            <person name="Vamathevan J.J."/>
            <person name="Khouri H."/>
            <person name="Utterback T.R."/>
            <person name="Lee C."/>
            <person name="Dimitrov G."/>
            <person name="Jiang L."/>
            <person name="Qin H."/>
            <person name="Weidman J."/>
            <person name="Tran K."/>
            <person name="Kang K.H."/>
            <person name="Hance I.R."/>
            <person name="Nelson K.E."/>
            <person name="Fraser C.M."/>
        </authorList>
    </citation>
    <scope>NUCLEOTIDE SEQUENCE [LARGE SCALE GENOMIC DNA]</scope>
    <source>
        <strain>COL</strain>
    </source>
</reference>
<proteinExistence type="inferred from homology"/>
<gene>
    <name evidence="2" type="primary">esxB</name>
    <name type="ordered locus">SACOL0278</name>
</gene>
<protein>
    <recommendedName>
        <fullName evidence="2">Type VII secretion system extracellular protein B</fullName>
        <shortName evidence="2">Ess extracellular protein B</shortName>
    </recommendedName>
</protein>
<comment type="function">
    <text evidence="1 2">Virulence factor that is important for the establishment of infection in the host. EsxB is required for EsxA synthesis as well as secretion (By similarity). Mediates together with EsxA the release of S.aureus from the host cell. Also inhibits host cytokine production and thus modulates dendritic cell-mediated immunity (By similarity).</text>
</comment>
<comment type="subunit">
    <text evidence="3">Homodimer. When mixed with EsxA does not form heterodimers.</text>
</comment>
<comment type="subcellular location">
    <subcellularLocation>
        <location evidence="2">Secreted</location>
    </subcellularLocation>
    <text evidence="2">Secreted via the ESAT-6 secretion system (Ess) / type VII secretion system (T7SS).</text>
</comment>
<comment type="similarity">
    <text evidence="4">Belongs to the WXG100 family.</text>
</comment>
<name>ESXB_STAAC</name>
<keyword id="KW-0964">Secreted</keyword>
<keyword id="KW-0843">Virulence</keyword>
<organism>
    <name type="scientific">Staphylococcus aureus (strain COL)</name>
    <dbReference type="NCBI Taxonomy" id="93062"/>
    <lineage>
        <taxon>Bacteria</taxon>
        <taxon>Bacillati</taxon>
        <taxon>Bacillota</taxon>
        <taxon>Bacilli</taxon>
        <taxon>Bacillales</taxon>
        <taxon>Staphylococcaceae</taxon>
        <taxon>Staphylococcus</taxon>
    </lineage>
</organism>